<protein>
    <recommendedName>
        <fullName>Pre-mRNA-splicing factor 38A</fullName>
    </recommendedName>
</protein>
<feature type="chain" id="PRO_0000287272" description="Pre-mRNA-splicing factor 38A">
    <location>
        <begin position="1"/>
        <end position="312"/>
    </location>
</feature>
<feature type="region of interest" description="N-terminal protein interaction domain" evidence="3">
    <location>
        <begin position="1"/>
        <end position="179"/>
    </location>
</feature>
<feature type="region of interest" description="Disordered" evidence="2">
    <location>
        <begin position="181"/>
        <end position="312"/>
    </location>
</feature>
<feature type="coiled-coil region" evidence="1">
    <location>
        <begin position="170"/>
        <end position="204"/>
    </location>
</feature>
<feature type="compositionally biased region" description="Acidic residues" evidence="2">
    <location>
        <begin position="184"/>
        <end position="202"/>
    </location>
</feature>
<feature type="compositionally biased region" description="Basic and acidic residues" evidence="2">
    <location>
        <begin position="203"/>
        <end position="224"/>
    </location>
</feature>
<feature type="compositionally biased region" description="Basic residues" evidence="2">
    <location>
        <begin position="225"/>
        <end position="294"/>
    </location>
</feature>
<feature type="compositionally biased region" description="Basic residues" evidence="2">
    <location>
        <begin position="301"/>
        <end position="312"/>
    </location>
</feature>
<feature type="modified residue" description="Phosphoserine" evidence="18">
    <location>
        <position position="11"/>
    </location>
</feature>
<feature type="modified residue" description="Phosphoserine" evidence="14 15 16 17 18">
    <location>
        <position position="193"/>
    </location>
</feature>
<feature type="modified residue" description="Phosphoserine" evidence="14 15 16 17 18">
    <location>
        <position position="194"/>
    </location>
</feature>
<feature type="modified residue" description="Phosphoserine" evidence="13 14 16 17 18 19">
    <location>
        <position position="209"/>
    </location>
</feature>
<feature type="modified residue" description="Phosphoserine" evidence="18">
    <location>
        <position position="226"/>
    </location>
</feature>
<feature type="splice variant" id="VSP_025424" description="In isoform 2." evidence="6">
    <location>
        <begin position="1"/>
        <end position="187"/>
    </location>
</feature>
<feature type="mutagenesis site" description="Loss of interaction with MFAP1." evidence="3">
    <original>D</original>
    <variation>A</variation>
    <location>
        <position position="145"/>
    </location>
</feature>
<feature type="sequence conflict" description="In Ref. 1; BAB55405." evidence="7" ref="1">
    <original>E</original>
    <variation>G</variation>
    <location>
        <position position="94"/>
    </location>
</feature>
<feature type="helix" evidence="21">
    <location>
        <begin position="1"/>
        <end position="3"/>
    </location>
</feature>
<feature type="helix" evidence="22">
    <location>
        <begin position="12"/>
        <end position="14"/>
    </location>
</feature>
<feature type="helix" evidence="20">
    <location>
        <begin position="17"/>
        <end position="20"/>
    </location>
</feature>
<feature type="helix" evidence="20">
    <location>
        <begin position="23"/>
        <end position="30"/>
    </location>
</feature>
<feature type="helix" evidence="20">
    <location>
        <begin position="33"/>
        <end position="38"/>
    </location>
</feature>
<feature type="helix" evidence="20">
    <location>
        <begin position="44"/>
        <end position="46"/>
    </location>
</feature>
<feature type="helix" evidence="20">
    <location>
        <begin position="47"/>
        <end position="51"/>
    </location>
</feature>
<feature type="strand" evidence="22">
    <location>
        <begin position="57"/>
        <end position="61"/>
    </location>
</feature>
<feature type="turn" evidence="20">
    <location>
        <begin position="62"/>
        <end position="65"/>
    </location>
</feature>
<feature type="helix" evidence="20">
    <location>
        <begin position="69"/>
        <end position="80"/>
    </location>
</feature>
<feature type="helix" evidence="20">
    <location>
        <begin position="84"/>
        <end position="92"/>
    </location>
</feature>
<feature type="helix" evidence="20">
    <location>
        <begin position="97"/>
        <end position="110"/>
    </location>
</feature>
<feature type="helix" evidence="20">
    <location>
        <begin position="113"/>
        <end position="120"/>
    </location>
</feature>
<feature type="helix" evidence="20">
    <location>
        <begin position="121"/>
        <end position="125"/>
    </location>
</feature>
<feature type="strand" evidence="20">
    <location>
        <begin position="129"/>
        <end position="133"/>
    </location>
</feature>
<feature type="strand" evidence="20">
    <location>
        <begin position="139"/>
        <end position="143"/>
    </location>
</feature>
<feature type="helix" evidence="20">
    <location>
        <begin position="144"/>
        <end position="153"/>
    </location>
</feature>
<feature type="strand" evidence="20">
    <location>
        <begin position="155"/>
        <end position="157"/>
    </location>
</feature>
<feature type="helix" evidence="20">
    <location>
        <begin position="168"/>
        <end position="173"/>
    </location>
</feature>
<keyword id="KW-0002">3D-structure</keyword>
<keyword id="KW-0025">Alternative splicing</keyword>
<keyword id="KW-0175">Coiled coil</keyword>
<keyword id="KW-0507">mRNA processing</keyword>
<keyword id="KW-0508">mRNA splicing</keyword>
<keyword id="KW-0539">Nucleus</keyword>
<keyword id="KW-0597">Phosphoprotein</keyword>
<keyword id="KW-1267">Proteomics identification</keyword>
<keyword id="KW-1185">Reference proteome</keyword>
<keyword id="KW-0747">Spliceosome</keyword>
<comment type="function">
    <text evidence="3 5">Involved in pre-mRNA splicing as a component of the spliceosome.</text>
</comment>
<comment type="subunit">
    <text evidence="4 5 8">Component of the spliceosome B complex (PubMed:26673105, PubMed:28781166). Interacts (via N-terminal interaction domain) with ZMAT2 and MFAP1 (Probable) (PubMed:27773687).</text>
</comment>
<comment type="interaction">
    <interactant intactId="EBI-715374">
        <id>Q8NAV1</id>
    </interactant>
    <interactant intactId="EBI-297683">
        <id>Q96CW1</id>
        <label>AP2M1</label>
    </interactant>
    <organismsDiffer>false</organismsDiffer>
    <experiments>5</experiments>
</comment>
<comment type="interaction">
    <interactant intactId="EBI-715374">
        <id>Q8NAV1</id>
    </interactant>
    <interactant intactId="EBI-750020">
        <id>P49760</id>
        <label>CLK2</label>
    </interactant>
    <organismsDiffer>false</organismsDiffer>
    <experiments>3</experiments>
</comment>
<comment type="interaction">
    <interactant intactId="EBI-715374">
        <id>Q8NAV1</id>
    </interactant>
    <interactant intactId="EBI-739789">
        <id>Q92997</id>
        <label>DVL3</label>
    </interactant>
    <organismsDiffer>false</organismsDiffer>
    <experiments>3</experiments>
</comment>
<comment type="interaction">
    <interactant intactId="EBI-715374">
        <id>Q8NAV1</id>
    </interactant>
    <interactant intactId="EBI-8464037">
        <id>Q6NYC1</id>
        <label>JMJD6</label>
    </interactant>
    <organismsDiffer>false</organismsDiffer>
    <experiments>5</experiments>
</comment>
<comment type="interaction">
    <interactant intactId="EBI-715374">
        <id>Q8NAV1</id>
    </interactant>
    <interactant intactId="EBI-1048159">
        <id>P55081</id>
        <label>MFAP1</label>
    </interactant>
    <organismsDiffer>false</organismsDiffer>
    <experiments>3</experiments>
</comment>
<comment type="interaction">
    <interactant intactId="EBI-715374">
        <id>Q8NAV1</id>
    </interactant>
    <interactant intactId="EBI-727004">
        <id>O00560</id>
        <label>SDCBP</label>
    </interactant>
    <organismsDiffer>false</organismsDiffer>
    <experiments>3</experiments>
</comment>
<comment type="interaction">
    <interactant intactId="EBI-715374">
        <id>Q8NAV1</id>
    </interactant>
    <interactant intactId="EBI-742426">
        <id>Q9H190</id>
        <label>SDCBP2</label>
    </interactant>
    <organismsDiffer>false</organismsDiffer>
    <experiments>7</experiments>
</comment>
<comment type="interaction">
    <interactant intactId="EBI-715374">
        <id>Q8NAV1</id>
    </interactant>
    <interactant intactId="EBI-539478">
        <id>Q96SB4</id>
        <label>SRPK1</label>
    </interactant>
    <organismsDiffer>false</organismsDiffer>
    <experiments>3</experiments>
</comment>
<comment type="interaction">
    <interactant intactId="EBI-715374">
        <id>Q8NAV1</id>
    </interactant>
    <interactant intactId="EBI-593303">
        <id>P78362</id>
        <label>SRPK2</label>
    </interactant>
    <organismsDiffer>false</organismsDiffer>
    <experiments>7</experiments>
</comment>
<comment type="interaction">
    <interactant intactId="EBI-715374">
        <id>Q8NAV1</id>
    </interactant>
    <interactant intactId="EBI-398885">
        <id>Q16629</id>
        <label>SRSF7</label>
    </interactant>
    <organismsDiffer>false</organismsDiffer>
    <experiments>3</experiments>
</comment>
<comment type="subcellular location">
    <subcellularLocation>
        <location evidence="5">Nucleus</location>
    </subcellularLocation>
</comment>
<comment type="alternative products">
    <event type="alternative splicing"/>
    <isoform>
        <id>Q8NAV1-1</id>
        <name>1</name>
        <sequence type="displayed"/>
    </isoform>
    <isoform>
        <id>Q8NAV1-2</id>
        <name>2</name>
        <sequence type="described" ref="VSP_025424"/>
    </isoform>
</comment>
<comment type="similarity">
    <text evidence="7">Belongs to the PRP38 family.</text>
</comment>
<comment type="sequence caution" evidence="7">
    <conflict type="erroneous initiation">
        <sequence resource="EMBL-CDS" id="BAB55405"/>
    </conflict>
</comment>
<dbReference type="EMBL" id="AK027842">
    <property type="protein sequence ID" value="BAB55405.1"/>
    <property type="status" value="ALT_INIT"/>
    <property type="molecule type" value="mRNA"/>
</dbReference>
<dbReference type="EMBL" id="AK092038">
    <property type="protein sequence ID" value="BAC03796.1"/>
    <property type="molecule type" value="mRNA"/>
</dbReference>
<dbReference type="EMBL" id="AL513218">
    <property type="status" value="NOT_ANNOTATED_CDS"/>
    <property type="molecule type" value="Genomic_DNA"/>
</dbReference>
<dbReference type="EMBL" id="BC000777">
    <property type="protein sequence ID" value="AAH00777.2"/>
    <property type="molecule type" value="mRNA"/>
</dbReference>
<dbReference type="EMBL" id="BC063655">
    <property type="protein sequence ID" value="AAH63655.1"/>
    <property type="molecule type" value="mRNA"/>
</dbReference>
<dbReference type="EMBL" id="BC105004">
    <property type="protein sequence ID" value="AAI05005.1"/>
    <property type="molecule type" value="mRNA"/>
</dbReference>
<dbReference type="EMBL" id="BC105006">
    <property type="protein sequence ID" value="AAI05007.1"/>
    <property type="molecule type" value="mRNA"/>
</dbReference>
<dbReference type="CCDS" id="CCDS567.1">
    <molecule id="Q8NAV1-1"/>
</dbReference>
<dbReference type="RefSeq" id="NP_116253.2">
    <molecule id="Q8NAV1-1"/>
    <property type="nucleotide sequence ID" value="NM_032864.3"/>
</dbReference>
<dbReference type="PDB" id="4RZ9">
    <property type="method" value="X-ray"/>
    <property type="resolution" value="1.28 A"/>
    <property type="chains" value="A=1-179"/>
</dbReference>
<dbReference type="PDB" id="4RZA">
    <property type="method" value="X-ray"/>
    <property type="resolution" value="1.90 A"/>
    <property type="chains" value="A=1-205"/>
</dbReference>
<dbReference type="PDB" id="5F5S">
    <property type="method" value="X-ray"/>
    <property type="resolution" value="2.40 A"/>
    <property type="chains" value="A=1-179"/>
</dbReference>
<dbReference type="PDB" id="5O9Z">
    <property type="method" value="EM"/>
    <property type="resolution" value="4.50 A"/>
    <property type="chains" value="I=1-312"/>
</dbReference>
<dbReference type="PDB" id="6AHD">
    <property type="method" value="EM"/>
    <property type="resolution" value="3.80 A"/>
    <property type="chains" value="Z=1-312"/>
</dbReference>
<dbReference type="PDB" id="7AAV">
    <property type="method" value="EM"/>
    <property type="resolution" value="4.20 A"/>
    <property type="chains" value="I=1-312"/>
</dbReference>
<dbReference type="PDB" id="7ABF">
    <property type="method" value="EM"/>
    <property type="resolution" value="3.90 A"/>
    <property type="chains" value="I=1-312"/>
</dbReference>
<dbReference type="PDB" id="7ABG">
    <property type="method" value="EM"/>
    <property type="resolution" value="7.80 A"/>
    <property type="chains" value="I=1-312"/>
</dbReference>
<dbReference type="PDB" id="7ABI">
    <property type="method" value="EM"/>
    <property type="resolution" value="8.00 A"/>
    <property type="chains" value="I=1-312"/>
</dbReference>
<dbReference type="PDB" id="8H6K">
    <property type="method" value="EM"/>
    <property type="resolution" value="2.70 A"/>
    <property type="chains" value="4L=1-312"/>
</dbReference>
<dbReference type="PDB" id="8Q7N">
    <property type="method" value="EM"/>
    <property type="resolution" value="3.10 A"/>
    <property type="chains" value="I=1-312"/>
</dbReference>
<dbReference type="PDB" id="8QO9">
    <property type="method" value="EM"/>
    <property type="resolution" value="5.29 A"/>
    <property type="chains" value="I=1-312"/>
</dbReference>
<dbReference type="PDB" id="8QPE">
    <property type="method" value="EM"/>
    <property type="resolution" value="3.10 A"/>
    <property type="chains" value="I=1-312"/>
</dbReference>
<dbReference type="PDB" id="8QZS">
    <property type="method" value="EM"/>
    <property type="resolution" value="4.10 A"/>
    <property type="chains" value="I=1-312"/>
</dbReference>
<dbReference type="PDBsum" id="4RZ9"/>
<dbReference type="PDBsum" id="4RZA"/>
<dbReference type="PDBsum" id="5F5S"/>
<dbReference type="PDBsum" id="5O9Z"/>
<dbReference type="PDBsum" id="6AHD"/>
<dbReference type="PDBsum" id="7AAV"/>
<dbReference type="PDBsum" id="7ABF"/>
<dbReference type="PDBsum" id="7ABG"/>
<dbReference type="PDBsum" id="7ABI"/>
<dbReference type="PDBsum" id="8H6K"/>
<dbReference type="PDBsum" id="8Q7N"/>
<dbReference type="PDBsum" id="8QO9"/>
<dbReference type="PDBsum" id="8QPE"/>
<dbReference type="PDBsum" id="8QZS"/>
<dbReference type="EMDB" id="EMD-11693"/>
<dbReference type="EMDB" id="EMD-11694"/>
<dbReference type="EMDB" id="EMD-11695"/>
<dbReference type="EMDB" id="EMD-11697"/>
<dbReference type="EMDB" id="EMD-18225"/>
<dbReference type="EMDB" id="EMD-18529"/>
<dbReference type="EMDB" id="EMD-18548"/>
<dbReference type="EMDB" id="EMD-18781"/>
<dbReference type="EMDB" id="EMD-34507"/>
<dbReference type="EMDB" id="EMD-3766"/>
<dbReference type="EMDB" id="EMD-9624"/>
<dbReference type="SMR" id="Q8NAV1"/>
<dbReference type="BioGRID" id="124382">
    <property type="interactions" value="175"/>
</dbReference>
<dbReference type="CORUM" id="Q8NAV1"/>
<dbReference type="FunCoup" id="Q8NAV1">
    <property type="interactions" value="3401"/>
</dbReference>
<dbReference type="IntAct" id="Q8NAV1">
    <property type="interactions" value="89"/>
</dbReference>
<dbReference type="MINT" id="Q8NAV1"/>
<dbReference type="STRING" id="9606.ENSP00000257181"/>
<dbReference type="GlyGen" id="Q8NAV1">
    <property type="glycosylation" value="1 site, 1 O-linked glycan (1 site)"/>
</dbReference>
<dbReference type="iPTMnet" id="Q8NAV1"/>
<dbReference type="PhosphoSitePlus" id="Q8NAV1"/>
<dbReference type="BioMuta" id="PRPF38A"/>
<dbReference type="DMDM" id="74760086"/>
<dbReference type="jPOST" id="Q8NAV1"/>
<dbReference type="MassIVE" id="Q8NAV1"/>
<dbReference type="PaxDb" id="9606-ENSP00000257181"/>
<dbReference type="PeptideAtlas" id="Q8NAV1"/>
<dbReference type="ProteomicsDB" id="72706">
    <molecule id="Q8NAV1-1"/>
</dbReference>
<dbReference type="ProteomicsDB" id="72707">
    <molecule id="Q8NAV1-2"/>
</dbReference>
<dbReference type="Pumba" id="Q8NAV1"/>
<dbReference type="Antibodypedia" id="53332">
    <property type="antibodies" value="114 antibodies from 24 providers"/>
</dbReference>
<dbReference type="DNASU" id="84950"/>
<dbReference type="Ensembl" id="ENST00000257181.10">
    <molecule id="Q8NAV1-1"/>
    <property type="protein sequence ID" value="ENSP00000257181.8"/>
    <property type="gene ID" value="ENSG00000134748.13"/>
</dbReference>
<dbReference type="GeneID" id="84950"/>
<dbReference type="KEGG" id="hsa:84950"/>
<dbReference type="MANE-Select" id="ENST00000257181.10">
    <property type="protein sequence ID" value="ENSP00000257181.8"/>
    <property type="RefSeq nucleotide sequence ID" value="NM_032864.4"/>
    <property type="RefSeq protein sequence ID" value="NP_116253.2"/>
</dbReference>
<dbReference type="UCSC" id="uc001ctv.5">
    <molecule id="Q8NAV1-1"/>
    <property type="organism name" value="human"/>
</dbReference>
<dbReference type="AGR" id="HGNC:25930"/>
<dbReference type="CTD" id="84950"/>
<dbReference type="DisGeNET" id="84950"/>
<dbReference type="GeneCards" id="PRPF38A"/>
<dbReference type="HGNC" id="HGNC:25930">
    <property type="gene designation" value="PRPF38A"/>
</dbReference>
<dbReference type="HPA" id="ENSG00000134748">
    <property type="expression patterns" value="Low tissue specificity"/>
</dbReference>
<dbReference type="neXtProt" id="NX_Q8NAV1"/>
<dbReference type="OpenTargets" id="ENSG00000134748"/>
<dbReference type="PharmGKB" id="PA142671125"/>
<dbReference type="VEuPathDB" id="HostDB:ENSG00000134748"/>
<dbReference type="eggNOG" id="KOG2889">
    <property type="taxonomic scope" value="Eukaryota"/>
</dbReference>
<dbReference type="GeneTree" id="ENSGT00730000111085"/>
<dbReference type="HOGENOM" id="CLU_039466_1_0_1"/>
<dbReference type="InParanoid" id="Q8NAV1"/>
<dbReference type="OMA" id="HTYWKEQ"/>
<dbReference type="OrthoDB" id="190958at2759"/>
<dbReference type="PAN-GO" id="Q8NAV1">
    <property type="GO annotations" value="1 GO annotation based on evolutionary models"/>
</dbReference>
<dbReference type="PhylomeDB" id="Q8NAV1"/>
<dbReference type="TreeFam" id="TF105910"/>
<dbReference type="PathwayCommons" id="Q8NAV1"/>
<dbReference type="Reactome" id="R-HSA-72163">
    <property type="pathway name" value="mRNA Splicing - Major Pathway"/>
</dbReference>
<dbReference type="SignaLink" id="Q8NAV1"/>
<dbReference type="BioGRID-ORCS" id="84950">
    <property type="hits" value="824 hits in 1159 CRISPR screens"/>
</dbReference>
<dbReference type="ChiTaRS" id="PRPF38A">
    <property type="organism name" value="human"/>
</dbReference>
<dbReference type="GenomeRNAi" id="84950"/>
<dbReference type="Pharos" id="Q8NAV1">
    <property type="development level" value="Tbio"/>
</dbReference>
<dbReference type="PRO" id="PR:Q8NAV1"/>
<dbReference type="Proteomes" id="UP000005640">
    <property type="component" value="Chromosome 1"/>
</dbReference>
<dbReference type="RNAct" id="Q8NAV1">
    <property type="molecule type" value="protein"/>
</dbReference>
<dbReference type="Bgee" id="ENSG00000134748">
    <property type="expression patterns" value="Expressed in tendon of biceps brachii and 194 other cell types or tissues"/>
</dbReference>
<dbReference type="GO" id="GO:0005654">
    <property type="term" value="C:nucleoplasm"/>
    <property type="evidence" value="ECO:0000314"/>
    <property type="project" value="HPA"/>
</dbReference>
<dbReference type="GO" id="GO:0005634">
    <property type="term" value="C:nucleus"/>
    <property type="evidence" value="ECO:0000314"/>
    <property type="project" value="UniProtKB"/>
</dbReference>
<dbReference type="GO" id="GO:0071011">
    <property type="term" value="C:precatalytic spliceosome"/>
    <property type="evidence" value="ECO:0000314"/>
    <property type="project" value="UniProtKB"/>
</dbReference>
<dbReference type="GO" id="GO:0071005">
    <property type="term" value="C:U2-type precatalytic spliceosome"/>
    <property type="evidence" value="ECO:0000314"/>
    <property type="project" value="UniProtKB"/>
</dbReference>
<dbReference type="GO" id="GO:0003723">
    <property type="term" value="F:RNA binding"/>
    <property type="evidence" value="ECO:0007005"/>
    <property type="project" value="UniProtKB"/>
</dbReference>
<dbReference type="GO" id="GO:0000398">
    <property type="term" value="P:mRNA splicing, via spliceosome"/>
    <property type="evidence" value="ECO:0000314"/>
    <property type="project" value="UniProtKB"/>
</dbReference>
<dbReference type="InterPro" id="IPR005037">
    <property type="entry name" value="PRP38"/>
</dbReference>
<dbReference type="InterPro" id="IPR024767">
    <property type="entry name" value="PRP38_C"/>
</dbReference>
<dbReference type="PANTHER" id="PTHR23142">
    <property type="entry name" value="PRE-MRNA-SPLICING FACTOR 38A-RELATED"/>
    <property type="match status" value="1"/>
</dbReference>
<dbReference type="Pfam" id="PF03371">
    <property type="entry name" value="PRP38"/>
    <property type="match status" value="1"/>
</dbReference>
<dbReference type="Pfam" id="PF12871">
    <property type="entry name" value="PRP38_assoc"/>
    <property type="match status" value="1"/>
</dbReference>
<name>PR38A_HUMAN</name>
<organism>
    <name type="scientific">Homo sapiens</name>
    <name type="common">Human</name>
    <dbReference type="NCBI Taxonomy" id="9606"/>
    <lineage>
        <taxon>Eukaryota</taxon>
        <taxon>Metazoa</taxon>
        <taxon>Chordata</taxon>
        <taxon>Craniata</taxon>
        <taxon>Vertebrata</taxon>
        <taxon>Euteleostomi</taxon>
        <taxon>Mammalia</taxon>
        <taxon>Eutheria</taxon>
        <taxon>Euarchontoglires</taxon>
        <taxon>Primates</taxon>
        <taxon>Haplorrhini</taxon>
        <taxon>Catarrhini</taxon>
        <taxon>Hominidae</taxon>
        <taxon>Homo</taxon>
    </lineage>
</organism>
<reference key="1">
    <citation type="journal article" date="2004" name="Nat. Genet.">
        <title>Complete sequencing and characterization of 21,243 full-length human cDNAs.</title>
        <authorList>
            <person name="Ota T."/>
            <person name="Suzuki Y."/>
            <person name="Nishikawa T."/>
            <person name="Otsuki T."/>
            <person name="Sugiyama T."/>
            <person name="Irie R."/>
            <person name="Wakamatsu A."/>
            <person name="Hayashi K."/>
            <person name="Sato H."/>
            <person name="Nagai K."/>
            <person name="Kimura K."/>
            <person name="Makita H."/>
            <person name="Sekine M."/>
            <person name="Obayashi M."/>
            <person name="Nishi T."/>
            <person name="Shibahara T."/>
            <person name="Tanaka T."/>
            <person name="Ishii S."/>
            <person name="Yamamoto J."/>
            <person name="Saito K."/>
            <person name="Kawai Y."/>
            <person name="Isono Y."/>
            <person name="Nakamura Y."/>
            <person name="Nagahari K."/>
            <person name="Murakami K."/>
            <person name="Yasuda T."/>
            <person name="Iwayanagi T."/>
            <person name="Wagatsuma M."/>
            <person name="Shiratori A."/>
            <person name="Sudo H."/>
            <person name="Hosoiri T."/>
            <person name="Kaku Y."/>
            <person name="Kodaira H."/>
            <person name="Kondo H."/>
            <person name="Sugawara M."/>
            <person name="Takahashi M."/>
            <person name="Kanda K."/>
            <person name="Yokoi T."/>
            <person name="Furuya T."/>
            <person name="Kikkawa E."/>
            <person name="Omura Y."/>
            <person name="Abe K."/>
            <person name="Kamihara K."/>
            <person name="Katsuta N."/>
            <person name="Sato K."/>
            <person name="Tanikawa M."/>
            <person name="Yamazaki M."/>
            <person name="Ninomiya K."/>
            <person name="Ishibashi T."/>
            <person name="Yamashita H."/>
            <person name="Murakawa K."/>
            <person name="Fujimori K."/>
            <person name="Tanai H."/>
            <person name="Kimata M."/>
            <person name="Watanabe M."/>
            <person name="Hiraoka S."/>
            <person name="Chiba Y."/>
            <person name="Ishida S."/>
            <person name="Ono Y."/>
            <person name="Takiguchi S."/>
            <person name="Watanabe S."/>
            <person name="Yosida M."/>
            <person name="Hotuta T."/>
            <person name="Kusano J."/>
            <person name="Kanehori K."/>
            <person name="Takahashi-Fujii A."/>
            <person name="Hara H."/>
            <person name="Tanase T.-O."/>
            <person name="Nomura Y."/>
            <person name="Togiya S."/>
            <person name="Komai F."/>
            <person name="Hara R."/>
            <person name="Takeuchi K."/>
            <person name="Arita M."/>
            <person name="Imose N."/>
            <person name="Musashino K."/>
            <person name="Yuuki H."/>
            <person name="Oshima A."/>
            <person name="Sasaki N."/>
            <person name="Aotsuka S."/>
            <person name="Yoshikawa Y."/>
            <person name="Matsunawa H."/>
            <person name="Ichihara T."/>
            <person name="Shiohata N."/>
            <person name="Sano S."/>
            <person name="Moriya S."/>
            <person name="Momiyama H."/>
            <person name="Satoh N."/>
            <person name="Takami S."/>
            <person name="Terashima Y."/>
            <person name="Suzuki O."/>
            <person name="Nakagawa S."/>
            <person name="Senoh A."/>
            <person name="Mizoguchi H."/>
            <person name="Goto Y."/>
            <person name="Shimizu F."/>
            <person name="Wakebe H."/>
            <person name="Hishigaki H."/>
            <person name="Watanabe T."/>
            <person name="Sugiyama A."/>
            <person name="Takemoto M."/>
            <person name="Kawakami B."/>
            <person name="Yamazaki M."/>
            <person name="Watanabe K."/>
            <person name="Kumagai A."/>
            <person name="Itakura S."/>
            <person name="Fukuzumi Y."/>
            <person name="Fujimori Y."/>
            <person name="Komiyama M."/>
            <person name="Tashiro H."/>
            <person name="Tanigami A."/>
            <person name="Fujiwara T."/>
            <person name="Ono T."/>
            <person name="Yamada K."/>
            <person name="Fujii Y."/>
            <person name="Ozaki K."/>
            <person name="Hirao M."/>
            <person name="Ohmori Y."/>
            <person name="Kawabata A."/>
            <person name="Hikiji T."/>
            <person name="Kobatake N."/>
            <person name="Inagaki H."/>
            <person name="Ikema Y."/>
            <person name="Okamoto S."/>
            <person name="Okitani R."/>
            <person name="Kawakami T."/>
            <person name="Noguchi S."/>
            <person name="Itoh T."/>
            <person name="Shigeta K."/>
            <person name="Senba T."/>
            <person name="Matsumura K."/>
            <person name="Nakajima Y."/>
            <person name="Mizuno T."/>
            <person name="Morinaga M."/>
            <person name="Sasaki M."/>
            <person name="Togashi T."/>
            <person name="Oyama M."/>
            <person name="Hata H."/>
            <person name="Watanabe M."/>
            <person name="Komatsu T."/>
            <person name="Mizushima-Sugano J."/>
            <person name="Satoh T."/>
            <person name="Shirai Y."/>
            <person name="Takahashi Y."/>
            <person name="Nakagawa K."/>
            <person name="Okumura K."/>
            <person name="Nagase T."/>
            <person name="Nomura N."/>
            <person name="Kikuchi H."/>
            <person name="Masuho Y."/>
            <person name="Yamashita R."/>
            <person name="Nakai K."/>
            <person name="Yada T."/>
            <person name="Nakamura Y."/>
            <person name="Ohara O."/>
            <person name="Isogai T."/>
            <person name="Sugano S."/>
        </authorList>
    </citation>
    <scope>NUCLEOTIDE SEQUENCE [LARGE SCALE MRNA] (ISOFORM 1)</scope>
    <source>
        <tissue>Placenta</tissue>
    </source>
</reference>
<reference key="2">
    <citation type="journal article" date="2006" name="Nature">
        <title>The DNA sequence and biological annotation of human chromosome 1.</title>
        <authorList>
            <person name="Gregory S.G."/>
            <person name="Barlow K.F."/>
            <person name="McLay K.E."/>
            <person name="Kaul R."/>
            <person name="Swarbreck D."/>
            <person name="Dunham A."/>
            <person name="Scott C.E."/>
            <person name="Howe K.L."/>
            <person name="Woodfine K."/>
            <person name="Spencer C.C.A."/>
            <person name="Jones M.C."/>
            <person name="Gillson C."/>
            <person name="Searle S."/>
            <person name="Zhou Y."/>
            <person name="Kokocinski F."/>
            <person name="McDonald L."/>
            <person name="Evans R."/>
            <person name="Phillips K."/>
            <person name="Atkinson A."/>
            <person name="Cooper R."/>
            <person name="Jones C."/>
            <person name="Hall R.E."/>
            <person name="Andrews T.D."/>
            <person name="Lloyd C."/>
            <person name="Ainscough R."/>
            <person name="Almeida J.P."/>
            <person name="Ambrose K.D."/>
            <person name="Anderson F."/>
            <person name="Andrew R.W."/>
            <person name="Ashwell R.I.S."/>
            <person name="Aubin K."/>
            <person name="Babbage A.K."/>
            <person name="Bagguley C.L."/>
            <person name="Bailey J."/>
            <person name="Beasley H."/>
            <person name="Bethel G."/>
            <person name="Bird C.P."/>
            <person name="Bray-Allen S."/>
            <person name="Brown J.Y."/>
            <person name="Brown A.J."/>
            <person name="Buckley D."/>
            <person name="Burton J."/>
            <person name="Bye J."/>
            <person name="Carder C."/>
            <person name="Chapman J.C."/>
            <person name="Clark S.Y."/>
            <person name="Clarke G."/>
            <person name="Clee C."/>
            <person name="Cobley V."/>
            <person name="Collier R.E."/>
            <person name="Corby N."/>
            <person name="Coville G.J."/>
            <person name="Davies J."/>
            <person name="Deadman R."/>
            <person name="Dunn M."/>
            <person name="Earthrowl M."/>
            <person name="Ellington A.G."/>
            <person name="Errington H."/>
            <person name="Frankish A."/>
            <person name="Frankland J."/>
            <person name="French L."/>
            <person name="Garner P."/>
            <person name="Garnett J."/>
            <person name="Gay L."/>
            <person name="Ghori M.R.J."/>
            <person name="Gibson R."/>
            <person name="Gilby L.M."/>
            <person name="Gillett W."/>
            <person name="Glithero R.J."/>
            <person name="Grafham D.V."/>
            <person name="Griffiths C."/>
            <person name="Griffiths-Jones S."/>
            <person name="Grocock R."/>
            <person name="Hammond S."/>
            <person name="Harrison E.S.I."/>
            <person name="Hart E."/>
            <person name="Haugen E."/>
            <person name="Heath P.D."/>
            <person name="Holmes S."/>
            <person name="Holt K."/>
            <person name="Howden P.J."/>
            <person name="Hunt A.R."/>
            <person name="Hunt S.E."/>
            <person name="Hunter G."/>
            <person name="Isherwood J."/>
            <person name="James R."/>
            <person name="Johnson C."/>
            <person name="Johnson D."/>
            <person name="Joy A."/>
            <person name="Kay M."/>
            <person name="Kershaw J.K."/>
            <person name="Kibukawa M."/>
            <person name="Kimberley A.M."/>
            <person name="King A."/>
            <person name="Knights A.J."/>
            <person name="Lad H."/>
            <person name="Laird G."/>
            <person name="Lawlor S."/>
            <person name="Leongamornlert D.A."/>
            <person name="Lloyd D.M."/>
            <person name="Loveland J."/>
            <person name="Lovell J."/>
            <person name="Lush M.J."/>
            <person name="Lyne R."/>
            <person name="Martin S."/>
            <person name="Mashreghi-Mohammadi M."/>
            <person name="Matthews L."/>
            <person name="Matthews N.S.W."/>
            <person name="McLaren S."/>
            <person name="Milne S."/>
            <person name="Mistry S."/>
            <person name="Moore M.J.F."/>
            <person name="Nickerson T."/>
            <person name="O'Dell C.N."/>
            <person name="Oliver K."/>
            <person name="Palmeiri A."/>
            <person name="Palmer S.A."/>
            <person name="Parker A."/>
            <person name="Patel D."/>
            <person name="Pearce A.V."/>
            <person name="Peck A.I."/>
            <person name="Pelan S."/>
            <person name="Phelps K."/>
            <person name="Phillimore B.J."/>
            <person name="Plumb R."/>
            <person name="Rajan J."/>
            <person name="Raymond C."/>
            <person name="Rouse G."/>
            <person name="Saenphimmachak C."/>
            <person name="Sehra H.K."/>
            <person name="Sheridan E."/>
            <person name="Shownkeen R."/>
            <person name="Sims S."/>
            <person name="Skuce C.D."/>
            <person name="Smith M."/>
            <person name="Steward C."/>
            <person name="Subramanian S."/>
            <person name="Sycamore N."/>
            <person name="Tracey A."/>
            <person name="Tromans A."/>
            <person name="Van Helmond Z."/>
            <person name="Wall M."/>
            <person name="Wallis J.M."/>
            <person name="White S."/>
            <person name="Whitehead S.L."/>
            <person name="Wilkinson J.E."/>
            <person name="Willey D.L."/>
            <person name="Williams H."/>
            <person name="Wilming L."/>
            <person name="Wray P.W."/>
            <person name="Wu Z."/>
            <person name="Coulson A."/>
            <person name="Vaudin M."/>
            <person name="Sulston J.E."/>
            <person name="Durbin R.M."/>
            <person name="Hubbard T."/>
            <person name="Wooster R."/>
            <person name="Dunham I."/>
            <person name="Carter N.P."/>
            <person name="McVean G."/>
            <person name="Ross M.T."/>
            <person name="Harrow J."/>
            <person name="Olson M.V."/>
            <person name="Beck S."/>
            <person name="Rogers J."/>
            <person name="Bentley D.R."/>
        </authorList>
    </citation>
    <scope>NUCLEOTIDE SEQUENCE [LARGE SCALE GENOMIC DNA]</scope>
</reference>
<reference key="3">
    <citation type="journal article" date="2004" name="Genome Res.">
        <title>The status, quality, and expansion of the NIH full-length cDNA project: the Mammalian Gene Collection (MGC).</title>
        <authorList>
            <consortium name="The MGC Project Team"/>
        </authorList>
    </citation>
    <scope>NUCLEOTIDE SEQUENCE [LARGE SCALE MRNA] (ISOFORMS 1 AND 2)</scope>
    <source>
        <tissue>Brain</tissue>
        <tissue>Cervix</tissue>
    </source>
</reference>
<reference key="4">
    <citation type="journal article" date="2006" name="Cell">
        <title>Global, in vivo, and site-specific phosphorylation dynamics in signaling networks.</title>
        <authorList>
            <person name="Olsen J.V."/>
            <person name="Blagoev B."/>
            <person name="Gnad F."/>
            <person name="Macek B."/>
            <person name="Kumar C."/>
            <person name="Mortensen P."/>
            <person name="Mann M."/>
        </authorList>
    </citation>
    <scope>PHOSPHORYLATION [LARGE SCALE ANALYSIS] AT SER-209</scope>
    <scope>IDENTIFICATION BY MASS SPECTROMETRY [LARGE SCALE ANALYSIS]</scope>
    <source>
        <tissue>Cervix carcinoma</tissue>
    </source>
</reference>
<reference key="5">
    <citation type="journal article" date="2008" name="Mol. Cell">
        <title>Kinase-selective enrichment enables quantitative phosphoproteomics of the kinome across the cell cycle.</title>
        <authorList>
            <person name="Daub H."/>
            <person name="Olsen J.V."/>
            <person name="Bairlein M."/>
            <person name="Gnad F."/>
            <person name="Oppermann F.S."/>
            <person name="Korner R."/>
            <person name="Greff Z."/>
            <person name="Keri G."/>
            <person name="Stemmann O."/>
            <person name="Mann M."/>
        </authorList>
    </citation>
    <scope>IDENTIFICATION BY MASS SPECTROMETRY [LARGE SCALE ANALYSIS]</scope>
    <source>
        <tissue>Cervix carcinoma</tissue>
    </source>
</reference>
<reference key="6">
    <citation type="journal article" date="2008" name="Proc. Natl. Acad. Sci. U.S.A.">
        <title>A quantitative atlas of mitotic phosphorylation.</title>
        <authorList>
            <person name="Dephoure N."/>
            <person name="Zhou C."/>
            <person name="Villen J."/>
            <person name="Beausoleil S.A."/>
            <person name="Bakalarski C.E."/>
            <person name="Elledge S.J."/>
            <person name="Gygi S.P."/>
        </authorList>
    </citation>
    <scope>PHOSPHORYLATION [LARGE SCALE ANALYSIS] AT SER-193; SER-194 AND SER-209</scope>
    <scope>IDENTIFICATION BY MASS SPECTROMETRY [LARGE SCALE ANALYSIS]</scope>
    <source>
        <tissue>Cervix carcinoma</tissue>
    </source>
</reference>
<reference key="7">
    <citation type="journal article" date="2009" name="Anal. Chem.">
        <title>Lys-N and trypsin cover complementary parts of the phosphoproteome in a refined SCX-based approach.</title>
        <authorList>
            <person name="Gauci S."/>
            <person name="Helbig A.O."/>
            <person name="Slijper M."/>
            <person name="Krijgsveld J."/>
            <person name="Heck A.J."/>
            <person name="Mohammed S."/>
        </authorList>
    </citation>
    <scope>IDENTIFICATION BY MASS SPECTROMETRY [LARGE SCALE ANALYSIS]</scope>
</reference>
<reference key="8">
    <citation type="journal article" date="2009" name="Sci. Signal.">
        <title>Quantitative phosphoproteomic analysis of T cell receptor signaling reveals system-wide modulation of protein-protein interactions.</title>
        <authorList>
            <person name="Mayya V."/>
            <person name="Lundgren D.H."/>
            <person name="Hwang S.-I."/>
            <person name="Rezaul K."/>
            <person name="Wu L."/>
            <person name="Eng J.K."/>
            <person name="Rodionov V."/>
            <person name="Han D.K."/>
        </authorList>
    </citation>
    <scope>PHOSPHORYLATION [LARGE SCALE ANALYSIS] AT SER-193 AND SER-194</scope>
    <scope>IDENTIFICATION BY MASS SPECTROMETRY [LARGE SCALE ANALYSIS]</scope>
    <source>
        <tissue>Leukemic T-cell</tissue>
    </source>
</reference>
<reference key="9">
    <citation type="journal article" date="2010" name="Sci. Signal.">
        <title>Quantitative phosphoproteomics reveals widespread full phosphorylation site occupancy during mitosis.</title>
        <authorList>
            <person name="Olsen J.V."/>
            <person name="Vermeulen M."/>
            <person name="Santamaria A."/>
            <person name="Kumar C."/>
            <person name="Miller M.L."/>
            <person name="Jensen L.J."/>
            <person name="Gnad F."/>
            <person name="Cox J."/>
            <person name="Jensen T.S."/>
            <person name="Nigg E.A."/>
            <person name="Brunak S."/>
            <person name="Mann M."/>
        </authorList>
    </citation>
    <scope>PHOSPHORYLATION [LARGE SCALE ANALYSIS] AT SER-193; SER-194 AND SER-209</scope>
    <scope>IDENTIFICATION BY MASS SPECTROMETRY [LARGE SCALE ANALYSIS]</scope>
    <source>
        <tissue>Cervix carcinoma</tissue>
    </source>
</reference>
<reference key="10">
    <citation type="journal article" date="2011" name="BMC Syst. Biol.">
        <title>Initial characterization of the human central proteome.</title>
        <authorList>
            <person name="Burkard T.R."/>
            <person name="Planyavsky M."/>
            <person name="Kaupe I."/>
            <person name="Breitwieser F.P."/>
            <person name="Buerckstuemmer T."/>
            <person name="Bennett K.L."/>
            <person name="Superti-Furga G."/>
            <person name="Colinge J."/>
        </authorList>
    </citation>
    <scope>IDENTIFICATION BY MASS SPECTROMETRY [LARGE SCALE ANALYSIS]</scope>
</reference>
<reference key="11">
    <citation type="journal article" date="2011" name="Sci. Signal.">
        <title>System-wide temporal characterization of the proteome and phosphoproteome of human embryonic stem cell differentiation.</title>
        <authorList>
            <person name="Rigbolt K.T."/>
            <person name="Prokhorova T.A."/>
            <person name="Akimov V."/>
            <person name="Henningsen J."/>
            <person name="Johansen P.T."/>
            <person name="Kratchmarova I."/>
            <person name="Kassem M."/>
            <person name="Mann M."/>
            <person name="Olsen J.V."/>
            <person name="Blagoev B."/>
        </authorList>
    </citation>
    <scope>PHOSPHORYLATION [LARGE SCALE ANALYSIS] AT SER-193; SER-194 AND SER-209</scope>
    <scope>IDENTIFICATION BY MASS SPECTROMETRY [LARGE SCALE ANALYSIS]</scope>
</reference>
<reference key="12">
    <citation type="journal article" date="2013" name="J. Proteome Res.">
        <title>Toward a comprehensive characterization of a human cancer cell phosphoproteome.</title>
        <authorList>
            <person name="Zhou H."/>
            <person name="Di Palma S."/>
            <person name="Preisinger C."/>
            <person name="Peng M."/>
            <person name="Polat A.N."/>
            <person name="Heck A.J."/>
            <person name="Mohammed S."/>
        </authorList>
    </citation>
    <scope>PHOSPHORYLATION [LARGE SCALE ANALYSIS] AT SER-11; SER-193; SER-194; SER-209 AND SER-226</scope>
    <scope>IDENTIFICATION BY MASS SPECTROMETRY [LARGE SCALE ANALYSIS]</scope>
    <source>
        <tissue>Cervix carcinoma</tissue>
        <tissue>Erythroleukemia</tissue>
    </source>
</reference>
<reference key="13">
    <citation type="journal article" date="2014" name="J. Proteomics">
        <title>An enzyme assisted RP-RPLC approach for in-depth analysis of human liver phosphoproteome.</title>
        <authorList>
            <person name="Bian Y."/>
            <person name="Song C."/>
            <person name="Cheng K."/>
            <person name="Dong M."/>
            <person name="Wang F."/>
            <person name="Huang J."/>
            <person name="Sun D."/>
            <person name="Wang L."/>
            <person name="Ye M."/>
            <person name="Zou H."/>
        </authorList>
    </citation>
    <scope>PHOSPHORYLATION [LARGE SCALE ANALYSIS] AT SER-209</scope>
    <scope>IDENTIFICATION BY MASS SPECTROMETRY [LARGE SCALE ANALYSIS]</scope>
    <source>
        <tissue>Liver</tissue>
    </source>
</reference>
<reference evidence="9 10" key="14">
    <citation type="journal article" date="2016" name="RNA">
        <title>Multiple protein-protein interactions converging on the Prp38 protein during activation of the human spliceosome.</title>
        <authorList>
            <person name="Schuetze T."/>
            <person name="Ulrich A.K."/>
            <person name="Apelt L."/>
            <person name="Will C.L."/>
            <person name="Bartlick N."/>
            <person name="Seeger M."/>
            <person name="Weber G."/>
            <person name="Luehrmann R."/>
            <person name="Stelzl U."/>
            <person name="Wahl M.C."/>
        </authorList>
    </citation>
    <scope>X-RAY CRYSTALLOGRAPHY (1.28 ANGSTROMS) OF 1-179</scope>
    <scope>INTERACTION WITH MFAP1 AND ZMAT2</scope>
    <scope>SUBUNIT</scope>
    <scope>MUTAGENESIS OF ASP-145</scope>
    <scope>FUNCTION</scope>
</reference>
<reference evidence="11" key="15">
    <citation type="journal article" date="2016" name="Structure">
        <title>Scaffolding in the Spliceosome via Single alpha Helices.</title>
        <authorList>
            <person name="Ulrich A.K.C."/>
            <person name="Seeger M."/>
            <person name="Schutze T."/>
            <person name="Bartlick N."/>
            <person name="Wahl M.C."/>
        </authorList>
    </citation>
    <scope>X-RAY CRYSTALLOGRAPHY (2.40 ANGSTROMS) OF 1-179 IN COMPLEX WITH MFAP1</scope>
    <scope>INTERACTION WITH MFAP1</scope>
</reference>
<reference evidence="12" key="16">
    <citation type="journal article" date="2017" name="Cell">
        <title>Cryo-EM Structure of a Pre-catalytic Human Spliceosome Primed for Activation.</title>
        <authorList>
            <person name="Bertram K."/>
            <person name="Agafonov D.E."/>
            <person name="Dybkov O."/>
            <person name="Haselbach D."/>
            <person name="Leelaram M.N."/>
            <person name="Will C.L."/>
            <person name="Urlaub H."/>
            <person name="Kastner B."/>
            <person name="Luhrmann R."/>
            <person name="Stark H."/>
        </authorList>
    </citation>
    <scope>STRUCTURE BY ELECTRON MICROSCOPY (4.50 ANGSTROMS)</scope>
    <scope>FUNCTION</scope>
    <scope>SUBCELLULAR LOCATION</scope>
    <scope>SUBUNIT</scope>
</reference>
<sequence length="312" mass="37477">MANRTVKDAHSIHGTNPQYLVEKIIRTRIYESKYWKEECFGLTAELVVDKAMELRFVGGVYGGNIKPTPFLCLTLKMLQIQPEKDIIVEFIKNEDFKYVRMLGALYMRLTGTAIDCYKYLEPLYNDYRKIKSQNRNGEFELMHVDEFIDELLHSERVCDIILPRLQKRYVLEEAEQLEPRVSALEEDMDDVESSEEEEEEDEKLERVPSPDHRRRSYRDLDKPRRSPTLRYRRSRSRSPRRRSRSPKRRSPSPRRERHRSKSPRRHRSRSRDRRHRSRSKSPGHHRSHRHRSHSKSPERSKKSHKKSRRGNE</sequence>
<proteinExistence type="evidence at protein level"/>
<evidence type="ECO:0000255" key="1"/>
<evidence type="ECO:0000256" key="2">
    <source>
        <dbReference type="SAM" id="MobiDB-lite"/>
    </source>
</evidence>
<evidence type="ECO:0000269" key="3">
    <source>
    </source>
</evidence>
<evidence type="ECO:0000269" key="4">
    <source>
    </source>
</evidence>
<evidence type="ECO:0000269" key="5">
    <source>
    </source>
</evidence>
<evidence type="ECO:0000303" key="6">
    <source>
    </source>
</evidence>
<evidence type="ECO:0000305" key="7"/>
<evidence type="ECO:0000305" key="8">
    <source>
    </source>
</evidence>
<evidence type="ECO:0007744" key="9">
    <source>
        <dbReference type="PDB" id="4RZ9"/>
    </source>
</evidence>
<evidence type="ECO:0007744" key="10">
    <source>
        <dbReference type="PDB" id="4RZA"/>
    </source>
</evidence>
<evidence type="ECO:0007744" key="11">
    <source>
        <dbReference type="PDB" id="5F5S"/>
    </source>
</evidence>
<evidence type="ECO:0007744" key="12">
    <source>
        <dbReference type="PDB" id="5O9Z"/>
    </source>
</evidence>
<evidence type="ECO:0007744" key="13">
    <source>
    </source>
</evidence>
<evidence type="ECO:0007744" key="14">
    <source>
    </source>
</evidence>
<evidence type="ECO:0007744" key="15">
    <source>
    </source>
</evidence>
<evidence type="ECO:0007744" key="16">
    <source>
    </source>
</evidence>
<evidence type="ECO:0007744" key="17">
    <source>
    </source>
</evidence>
<evidence type="ECO:0007744" key="18">
    <source>
    </source>
</evidence>
<evidence type="ECO:0007744" key="19">
    <source>
    </source>
</evidence>
<evidence type="ECO:0007829" key="20">
    <source>
        <dbReference type="PDB" id="4RZ9"/>
    </source>
</evidence>
<evidence type="ECO:0007829" key="21">
    <source>
        <dbReference type="PDB" id="5F5S"/>
    </source>
</evidence>
<evidence type="ECO:0007829" key="22">
    <source>
        <dbReference type="PDB" id="8Q7N"/>
    </source>
</evidence>
<accession>Q8NAV1</accession>
<accession>Q96JW1</accession>
<accession>Q9BVZ8</accession>
<gene>
    <name type="primary">PRPF38A</name>
</gene>